<name>PRQFV_APLCA</name>
<feature type="signal peptide" evidence="1">
    <location>
        <begin position="1"/>
        <end position="20"/>
    </location>
</feature>
<feature type="propeptide" id="PRO_0000309785" evidence="1">
    <location>
        <begin position="21"/>
        <end position="79"/>
    </location>
</feature>
<feature type="peptide" id="PRO_0000309748" description="AREFV-amide">
    <location>
        <begin position="82"/>
        <end position="86"/>
    </location>
</feature>
<feature type="propeptide" id="PRO_0000309786">
    <location>
        <begin position="90"/>
        <end position="149"/>
    </location>
</feature>
<feature type="peptide" id="PRO_0000309749" description="PRQFV-amide">
    <location>
        <begin position="152"/>
        <end position="156"/>
    </location>
</feature>
<feature type="propeptide" id="PRO_0000309787">
    <location>
        <begin position="160"/>
        <end position="175"/>
    </location>
</feature>
<feature type="peptide" id="PRO_0000309750" description="PRQFV-amide">
    <location>
        <begin position="178"/>
        <end position="182"/>
    </location>
</feature>
<feature type="peptide" id="PRO_0000309751" description="PRQFV-amide">
    <location>
        <begin position="186"/>
        <end position="190"/>
    </location>
</feature>
<feature type="peptide" id="PRO_0000309752" description="PRQFV-amide">
    <location>
        <begin position="194"/>
        <end position="198"/>
    </location>
</feature>
<feature type="peptide" id="PRO_0000309753" description="PRQFV-amide">
    <location>
        <begin position="202"/>
        <end position="206"/>
    </location>
</feature>
<feature type="peptide" id="PRO_0000309754" description="PRQFV-amide">
    <location>
        <begin position="210"/>
        <end position="214"/>
    </location>
</feature>
<feature type="peptide" id="PRO_0000309755" description="PRQFV-amide">
    <location>
        <begin position="218"/>
        <end position="222"/>
    </location>
</feature>
<feature type="peptide" id="PRO_0000309756" description="PRQFV-amide">
    <location>
        <begin position="226"/>
        <end position="230"/>
    </location>
</feature>
<feature type="peptide" id="PRO_0000309757" description="PRQFV-amide">
    <location>
        <begin position="234"/>
        <end position="238"/>
    </location>
</feature>
<feature type="peptide" id="PRO_0000309758" description="PRQFV-amide">
    <location>
        <begin position="242"/>
        <end position="246"/>
    </location>
</feature>
<feature type="propeptide" id="PRO_0000309788">
    <location>
        <begin position="250"/>
        <end position="259"/>
    </location>
</feature>
<feature type="peptide" id="PRO_0000309759" description="VRDFV-amide">
    <location>
        <begin position="262"/>
        <end position="266"/>
    </location>
</feature>
<feature type="propeptide" id="PRO_0000309789">
    <location>
        <begin position="270"/>
        <end position="300"/>
    </location>
</feature>
<feature type="peptide" id="PRO_0000309760" description="PRQFV-amide">
    <location>
        <begin position="303"/>
        <end position="307"/>
    </location>
</feature>
<feature type="propeptide" id="PRO_0000309790">
    <location>
        <begin position="311"/>
        <end position="319"/>
    </location>
</feature>
<feature type="peptide" id="PRO_0000309761" description="PRQFV-amide">
    <location>
        <begin position="322"/>
        <end position="326"/>
    </location>
</feature>
<feature type="propeptide" id="PRO_0000309791">
    <location>
        <begin position="330"/>
        <end position="338"/>
    </location>
</feature>
<feature type="peptide" id="PRO_0000309762" description="PRQFV-amide">
    <location>
        <begin position="341"/>
        <end position="345"/>
    </location>
</feature>
<feature type="propeptide" id="PRO_0000309792">
    <location>
        <begin position="349"/>
        <end position="357"/>
    </location>
</feature>
<feature type="peptide" id="PRO_0000309763" description="PRQFV-amide">
    <location>
        <begin position="360"/>
        <end position="364"/>
    </location>
</feature>
<feature type="propeptide" id="PRO_0000309793">
    <location>
        <begin position="368"/>
        <end position="376"/>
    </location>
</feature>
<feature type="peptide" id="PRO_0000309764" description="PRQFV-amide">
    <location>
        <begin position="379"/>
        <end position="383"/>
    </location>
</feature>
<feature type="propeptide" id="PRO_0000309794">
    <location>
        <begin position="387"/>
        <end position="395"/>
    </location>
</feature>
<feature type="peptide" id="PRO_0000309765" description="PRQFV-amide">
    <location>
        <begin position="398"/>
        <end position="402"/>
    </location>
</feature>
<feature type="propeptide" id="PRO_0000309795">
    <location>
        <begin position="406"/>
        <end position="414"/>
    </location>
</feature>
<feature type="peptide" id="PRO_0000309766" description="PRQFV-amide">
    <location>
        <begin position="417"/>
        <end position="421"/>
    </location>
</feature>
<feature type="propeptide" id="PRO_0000309796">
    <location>
        <begin position="425"/>
        <end position="433"/>
    </location>
</feature>
<feature type="peptide" id="PRO_0000309767" description="PRQFV-amide">
    <location>
        <begin position="436"/>
        <end position="440"/>
    </location>
</feature>
<feature type="propeptide" id="PRO_0000309797">
    <location>
        <begin position="444"/>
        <end position="451"/>
    </location>
</feature>
<feature type="peptide" id="PRO_0000309768" description="PRQFV-amide">
    <location>
        <begin position="454"/>
        <end position="458"/>
    </location>
</feature>
<feature type="propeptide" id="PRO_0000309798">
    <location>
        <begin position="462"/>
        <end position="470"/>
    </location>
</feature>
<feature type="peptide" id="PRO_0000309769" description="PRQFV-amide">
    <location>
        <begin position="473"/>
        <end position="477"/>
    </location>
</feature>
<feature type="propeptide" id="PRO_0000309799">
    <location>
        <begin position="481"/>
        <end position="489"/>
    </location>
</feature>
<feature type="peptide" id="PRO_0000309770" description="PRQFV-amide">
    <location>
        <begin position="492"/>
        <end position="496"/>
    </location>
</feature>
<feature type="propeptide" id="PRO_0000309800">
    <location>
        <begin position="500"/>
        <end position="507"/>
    </location>
</feature>
<feature type="peptide" id="PRO_0000309771" description="PRQFV-amide">
    <location>
        <begin position="510"/>
        <end position="514"/>
    </location>
</feature>
<feature type="propeptide" id="PRO_0000309801">
    <location>
        <begin position="518"/>
        <end position="526"/>
    </location>
</feature>
<feature type="peptide" id="PRO_0000309772" description="PRQFV-amide">
    <location>
        <begin position="529"/>
        <end position="533"/>
    </location>
</feature>
<feature type="propeptide" id="PRO_0000309802">
    <location>
        <begin position="537"/>
        <end position="545"/>
    </location>
</feature>
<feature type="peptide" id="PRO_0000309773" description="PRQFV-amide">
    <location>
        <begin position="548"/>
        <end position="552"/>
    </location>
</feature>
<feature type="propeptide" id="PRO_0000309803">
    <location>
        <begin position="556"/>
        <end position="564"/>
    </location>
</feature>
<feature type="peptide" id="PRO_0000309774" description="PRQFV-amide">
    <location>
        <begin position="567"/>
        <end position="571"/>
    </location>
</feature>
<feature type="propeptide" id="PRO_0000309804">
    <location>
        <begin position="575"/>
        <end position="583"/>
    </location>
</feature>
<feature type="peptide" id="PRO_0000309775" description="PRQFV-amide">
    <location>
        <begin position="586"/>
        <end position="590"/>
    </location>
</feature>
<feature type="propeptide" id="PRO_0000309805">
    <location>
        <begin position="594"/>
        <end position="602"/>
    </location>
</feature>
<feature type="peptide" id="PRO_0000309776" description="PRQFV-amide">
    <location>
        <begin position="605"/>
        <end position="609"/>
    </location>
</feature>
<feature type="propeptide" id="PRO_0000309806">
    <location>
        <begin position="613"/>
        <end position="621"/>
    </location>
</feature>
<feature type="peptide" id="PRO_0000309777" description="PRQFV-amide">
    <location>
        <begin position="624"/>
        <end position="628"/>
    </location>
</feature>
<feature type="propeptide" id="PRO_0000309807">
    <location>
        <begin position="632"/>
        <end position="640"/>
    </location>
</feature>
<feature type="peptide" id="PRO_0000309778" description="PRQFV-amide">
    <location>
        <begin position="643"/>
        <end position="647"/>
    </location>
</feature>
<feature type="propeptide" id="PRO_0000309808">
    <location>
        <begin position="651"/>
        <end position="659"/>
    </location>
</feature>
<feature type="peptide" id="PRO_0000309779" description="PRQFV-amide">
    <location>
        <begin position="662"/>
        <end position="666"/>
    </location>
</feature>
<feature type="propeptide" id="PRO_0000309809">
    <location>
        <begin position="670"/>
        <end position="677"/>
    </location>
</feature>
<feature type="peptide" id="PRO_0000309780" description="PRQFV-amide">
    <location>
        <begin position="680"/>
        <end position="684"/>
    </location>
</feature>
<feature type="propeptide" id="PRO_0000309810">
    <location>
        <begin position="688"/>
        <end position="695"/>
    </location>
</feature>
<feature type="peptide" id="PRO_0000309781" description="PRQFV-amide">
    <location>
        <begin position="698"/>
        <end position="702"/>
    </location>
</feature>
<feature type="propeptide" id="PRO_0000309811">
    <location>
        <begin position="706"/>
        <end position="714"/>
    </location>
</feature>
<feature type="peptide" id="PRO_0000309782" description="PRQFV-amide">
    <location>
        <begin position="717"/>
        <end position="721"/>
    </location>
</feature>
<feature type="propeptide" id="PRO_0000309812">
    <location>
        <begin position="724"/>
        <end position="757"/>
    </location>
</feature>
<feature type="peptide" id="PRO_0000309783" description="VREFV-amide">
    <location>
        <begin position="760"/>
        <end position="764"/>
    </location>
</feature>
<feature type="propeptide" id="PRO_0000309813">
    <location>
        <begin position="768"/>
        <end position="812"/>
    </location>
</feature>
<feature type="peptide" id="PRO_0000309784" description="IREFV-amide">
    <location>
        <begin position="815"/>
        <end position="819"/>
    </location>
</feature>
<feature type="propeptide" id="PRO_0000309814">
    <location>
        <begin position="823"/>
        <end position="862"/>
    </location>
</feature>
<feature type="region of interest" description="Disordered" evidence="2">
    <location>
        <begin position="32"/>
        <end position="68"/>
    </location>
</feature>
<feature type="region of interest" description="Disordered" evidence="2">
    <location>
        <begin position="424"/>
        <end position="528"/>
    </location>
</feature>
<feature type="region of interest" description="Disordered" evidence="2">
    <location>
        <begin position="549"/>
        <end position="634"/>
    </location>
</feature>
<feature type="compositionally biased region" description="Basic and acidic residues" evidence="2">
    <location>
        <begin position="43"/>
        <end position="53"/>
    </location>
</feature>
<feature type="compositionally biased region" description="Basic and acidic residues" evidence="2">
    <location>
        <begin position="424"/>
        <end position="434"/>
    </location>
</feature>
<feature type="compositionally biased region" description="Basic and acidic residues" evidence="2">
    <location>
        <begin position="441"/>
        <end position="452"/>
    </location>
</feature>
<feature type="compositionally biased region" description="Basic and acidic residues" evidence="2">
    <location>
        <begin position="459"/>
        <end position="471"/>
    </location>
</feature>
<feature type="compositionally biased region" description="Basic and acidic residues" evidence="2">
    <location>
        <begin position="478"/>
        <end position="490"/>
    </location>
</feature>
<feature type="compositionally biased region" description="Basic and acidic residues" evidence="2">
    <location>
        <begin position="497"/>
        <end position="508"/>
    </location>
</feature>
<feature type="compositionally biased region" description="Basic and acidic residues" evidence="2">
    <location>
        <begin position="515"/>
        <end position="527"/>
    </location>
</feature>
<feature type="compositionally biased region" description="Basic and acidic residues" evidence="2">
    <location>
        <begin position="553"/>
        <end position="565"/>
    </location>
</feature>
<feature type="compositionally biased region" description="Basic and acidic residues" evidence="2">
    <location>
        <begin position="572"/>
        <end position="584"/>
    </location>
</feature>
<feature type="compositionally biased region" description="Basic and acidic residues" evidence="2">
    <location>
        <begin position="610"/>
        <end position="622"/>
    </location>
</feature>
<feature type="modified residue" description="Valine amide" evidence="3">
    <location>
        <position position="86"/>
    </location>
</feature>
<feature type="modified residue" description="Valine amide" evidence="3">
    <location>
        <position position="156"/>
    </location>
</feature>
<feature type="modified residue" description="Valine amide" evidence="3">
    <location>
        <position position="182"/>
    </location>
</feature>
<feature type="modified residue" description="Valine amide" evidence="3">
    <location>
        <position position="190"/>
    </location>
</feature>
<feature type="modified residue" description="Valine amide" evidence="3">
    <location>
        <position position="198"/>
    </location>
</feature>
<feature type="modified residue" description="Valine amide" evidence="3">
    <location>
        <position position="206"/>
    </location>
</feature>
<feature type="modified residue" description="Valine amide" evidence="3">
    <location>
        <position position="214"/>
    </location>
</feature>
<feature type="modified residue" description="Valine amide" evidence="3">
    <location>
        <position position="222"/>
    </location>
</feature>
<feature type="modified residue" description="Valine amide" evidence="3">
    <location>
        <position position="230"/>
    </location>
</feature>
<feature type="modified residue" description="Valine amide" evidence="3">
    <location>
        <position position="238"/>
    </location>
</feature>
<feature type="modified residue" description="Valine amide" evidence="3">
    <location>
        <position position="246"/>
    </location>
</feature>
<feature type="modified residue" description="Valine amide" evidence="3">
    <location>
        <position position="266"/>
    </location>
</feature>
<feature type="modified residue" description="Valine amide" evidence="3">
    <location>
        <position position="307"/>
    </location>
</feature>
<feature type="modified residue" description="Valine amide" evidence="3">
    <location>
        <position position="326"/>
    </location>
</feature>
<feature type="modified residue" description="Valine amide" evidence="3">
    <location>
        <position position="345"/>
    </location>
</feature>
<feature type="modified residue" description="Valine amide" evidence="3">
    <location>
        <position position="364"/>
    </location>
</feature>
<feature type="modified residue" description="Valine amide" evidence="3">
    <location>
        <position position="383"/>
    </location>
</feature>
<feature type="modified residue" description="Valine amide" evidence="3">
    <location>
        <position position="402"/>
    </location>
</feature>
<feature type="modified residue" description="Valine amide" evidence="3">
    <location>
        <position position="421"/>
    </location>
</feature>
<feature type="modified residue" description="Valine amide" evidence="3">
    <location>
        <position position="440"/>
    </location>
</feature>
<feature type="modified residue" description="Valine amide" evidence="3">
    <location>
        <position position="458"/>
    </location>
</feature>
<feature type="modified residue" description="Valine amide" evidence="3">
    <location>
        <position position="477"/>
    </location>
</feature>
<feature type="modified residue" description="Valine amide" evidence="3">
    <location>
        <position position="496"/>
    </location>
</feature>
<feature type="modified residue" description="Valine amide" evidence="3">
    <location>
        <position position="514"/>
    </location>
</feature>
<feature type="modified residue" description="Valine amide" evidence="3">
    <location>
        <position position="533"/>
    </location>
</feature>
<feature type="modified residue" description="Valine amide" evidence="3">
    <location>
        <position position="552"/>
    </location>
</feature>
<feature type="modified residue" description="Valine amide" evidence="3">
    <location>
        <position position="571"/>
    </location>
</feature>
<feature type="modified residue" description="Valine amide" evidence="3">
    <location>
        <position position="590"/>
    </location>
</feature>
<feature type="modified residue" description="Valine amide" evidence="3">
    <location>
        <position position="609"/>
    </location>
</feature>
<feature type="modified residue" description="Valine amide" evidence="3">
    <location>
        <position position="628"/>
    </location>
</feature>
<feature type="modified residue" description="Valine amide" evidence="3">
    <location>
        <position position="647"/>
    </location>
</feature>
<feature type="modified residue" description="Valine amide" evidence="3">
    <location>
        <position position="666"/>
    </location>
</feature>
<feature type="modified residue" description="Valine amide" evidence="3">
    <location>
        <position position="684"/>
    </location>
</feature>
<feature type="modified residue" description="Valine amide" evidence="3">
    <location>
        <position position="702"/>
    </location>
</feature>
<feature type="modified residue" description="Valine amide" evidence="3">
    <location>
        <position position="721"/>
    </location>
</feature>
<feature type="modified residue" description="Valine amide" evidence="3">
    <location>
        <position position="764"/>
    </location>
</feature>
<feature type="modified residue" description="Valine amide" evidence="3">
    <location>
        <position position="819"/>
    </location>
</feature>
<reference key="1">
    <citation type="journal article" date="2003" name="J. Neurophysiol.">
        <title>PRQFVamide, a novel pentapeptide identified from the CNS and gut of Aplysia.</title>
        <authorList>
            <person name="Furukawa Y."/>
            <person name="Nakamaru K."/>
            <person name="Sasaki K."/>
            <person name="Fujisawa Y."/>
            <person name="Minakata H."/>
            <person name="Ohta S."/>
            <person name="Morishita F."/>
            <person name="Matsushima O."/>
            <person name="Li L."/>
            <person name="Alexeeva V."/>
            <person name="Ellis T.A."/>
            <person name="Dembrow N.C."/>
            <person name="Jing J."/>
            <person name="Sweedler J.V."/>
            <person name="Weiss K.R."/>
            <person name="Vilim F.S."/>
        </authorList>
    </citation>
    <scope>NUCLEOTIDE SEQUENCE [MRNA]</scope>
    <scope>FUNCTION</scope>
    <scope>TISSUE SPECIFICITY</scope>
    <scope>PROTEOLYTIC PROCESSING</scope>
    <scope>AMIDATION AT VAL-86; VAL-156; VAL-182; VAL-190; VAL-198; VAL-206; VAL-214; VAL-222; VAL-230; VAL-238; VAL-246; VAL-266; VAL-307; VAL-326; VAL-345; VAL-364; VAL-383; VAL-402; VAL-421; VAL-440; VAL-458; VAL-477; VAL-496; VAL-514; VAL-533; VAL-552; VAL-571; VAL-590; VAL-609; VAL-628; VAL-647; VAL-666; VAL-684; VAL-702; VAL-721; VAL-764 AND VAL-819</scope>
    <scope>MASS SPECTROMETRY</scope>
    <source>
        <tissue>CNS</tissue>
    </source>
</reference>
<dbReference type="EMBL" id="AY231295">
    <property type="protein sequence ID" value="AAO73964.1"/>
    <property type="molecule type" value="mRNA"/>
</dbReference>
<dbReference type="RefSeq" id="NP_001191529.1">
    <property type="nucleotide sequence ID" value="NM_001204600.1"/>
</dbReference>
<dbReference type="EnsemblMetazoa" id="NM_001204600.1">
    <property type="protein sequence ID" value="NP_001191529.1"/>
    <property type="gene ID" value="LOC100533301"/>
</dbReference>
<dbReference type="GeneID" id="100533301"/>
<dbReference type="OrthoDB" id="6054663at2759"/>
<dbReference type="Proteomes" id="UP000694888">
    <property type="component" value="Unplaced"/>
</dbReference>
<dbReference type="GO" id="GO:0005576">
    <property type="term" value="C:extracellular region"/>
    <property type="evidence" value="ECO:0007669"/>
    <property type="project" value="UniProtKB-SubCell"/>
</dbReference>
<dbReference type="GO" id="GO:0007218">
    <property type="term" value="P:neuropeptide signaling pathway"/>
    <property type="evidence" value="ECO:0007669"/>
    <property type="project" value="UniProtKB-KW"/>
</dbReference>
<dbReference type="PANTHER" id="PTHR17530">
    <property type="entry name" value="PRO-THYROTROPIN-RELEASING HORMONE"/>
    <property type="match status" value="1"/>
</dbReference>
<dbReference type="PANTHER" id="PTHR17530:SF2">
    <property type="entry name" value="PRO-THYROTROPIN-RELEASING HORMONE"/>
    <property type="match status" value="1"/>
</dbReference>
<sequence length="862" mass="101508">MSSQLLICSVFVLFTFGPNSFPSCLAQEQAGNSDATQLSADAKAPESAKDKSGDVQNDGTKSVRSKRDLEIDFGSGDVQKRAREFVGKRAAPPVFQTPLVQDKISGFIPSETESPVIGEFAFPGSVFMDDEEALGAEEEPMDDEDLEFYKRPRQFVGKRGIDDYLLQEKLKDFIEKRPRQFVGKRPRQFVGKRPRQFVGKRPRQFVGKRPRQFVGKRPRQFVGKRPRQFVGKRPRQFVGKRPRQFVGKREADPSFLFEDKRVRDFVGKRSLDFLGGANWYNPYDVTMEPQSEGSDLQGFSKRPRQFVGKRDAFDMFEFSKRPRQFVGKRDQDEMFDFSKRPRQFVGKRDLQEFFDLSKRPRQFVGKREFDDEIDFSKRPRQFVGKRENDDDFDLSKRPRQFVGKRENDDEFDLSKRPRQFVGKRENDDELEFSKRPRQFVGKREDDEIDFSKRPRQFVGKRENDGEIDFSKRPRQFVGKRENDDEIDFSKRPRQFVGKREDGEIDFSKRPRQFVGKRENNDDLDFSKRPRQFVGKREVDDEIDFSKRPRQFVGKRENDDDLDFSKRPRQFVGKRENDDDLEFSKRPRQFVGKRENDPLLDFSKRPRQFVGKRENDDDLDFSKRPRQFVGKRENDPLIDFSKRPRQFVGKRESDGDFELSKRPRQFVGKRDVDGPGLSKRPRQFVGKREDYDIDFAKRPRQFVGKRGNEDEFEMSKRPRQFVGKRNFEELDQDFLRHMHDILDKRIPQFVSLPSLTAAKRVREFVGKRSDAAFLETLRHLRDYVGGQDEQNVSEFSYQHPYPSDLNDVGLIQQKRIREFVGKRGGDVDDINTTYRLGDFVSQPMSFVEEPSWLCRQLNAFGIS</sequence>
<evidence type="ECO:0000255" key="1"/>
<evidence type="ECO:0000256" key="2">
    <source>
        <dbReference type="SAM" id="MobiDB-lite"/>
    </source>
</evidence>
<evidence type="ECO:0000269" key="3">
    <source>
    </source>
</evidence>
<accession>Q86MA7</accession>
<keyword id="KW-0027">Amidation</keyword>
<keyword id="KW-0527">Neuropeptide</keyword>
<keyword id="KW-0964">Secreted</keyword>
<keyword id="KW-0732">Signal</keyword>
<comment type="function">
    <text evidence="3">PRQFV-amide may act as a modulator within the feeding system as well as in other systems of Aplysia.</text>
</comment>
<comment type="subcellular location">
    <subcellularLocation>
        <location>Secreted</location>
    </subcellularLocation>
</comment>
<comment type="tissue specificity">
    <text evidence="3">Expressed abundantly in the abdominal ganglion, much less in the pedal and cerebral ganglia, and rarely in the buccal and pleural ganglia.</text>
</comment>
<comment type="mass spectrometry" mass="619.33" method="MALDI" evidence="3">
    <molecule>AREFV-amide</molecule>
</comment>
<comment type="mass spectrometry" mass="644.36" method="MALDI" evidence="3">
    <molecule>PRQFV-amide</molecule>
    <text>PRQFV-amide.</text>
</comment>
<comment type="mass spectrometry" mass="633.34" method="MALDI" evidence="3">
    <molecule>VRDFV-amide</molecule>
</comment>
<comment type="mass spectrometry" mass="647.36" method="MALDI" evidence="3">
    <molecule>VREFV-amide</molecule>
</comment>
<comment type="mass spectrometry" mass="661.38" method="MALDI" evidence="3">
    <molecule>IREFV-amide</molecule>
</comment>
<organism>
    <name type="scientific">Aplysia californica</name>
    <name type="common">California sea hare</name>
    <dbReference type="NCBI Taxonomy" id="6500"/>
    <lineage>
        <taxon>Eukaryota</taxon>
        <taxon>Metazoa</taxon>
        <taxon>Spiralia</taxon>
        <taxon>Lophotrochozoa</taxon>
        <taxon>Mollusca</taxon>
        <taxon>Gastropoda</taxon>
        <taxon>Heterobranchia</taxon>
        <taxon>Euthyneura</taxon>
        <taxon>Tectipleura</taxon>
        <taxon>Aplysiida</taxon>
        <taxon>Aplysioidea</taxon>
        <taxon>Aplysiidae</taxon>
        <taxon>Aplysia</taxon>
    </lineage>
</organism>
<proteinExistence type="evidence at protein level"/>
<protein>
    <recommendedName>
        <fullName>Protein PRQFV-amide</fullName>
    </recommendedName>
    <component>
        <recommendedName>
            <fullName>AREFV-amide</fullName>
        </recommendedName>
    </component>
    <component>
        <recommendedName>
            <fullName>PRQFV-amide</fullName>
            <shortName>PRQFVa</shortName>
        </recommendedName>
    </component>
    <component>
        <recommendedName>
            <fullName>VRDFV-amide</fullName>
        </recommendedName>
    </component>
    <component>
        <recommendedName>
            <fullName>VREFV-amide</fullName>
        </recommendedName>
    </component>
    <component>
        <recommendedName>
            <fullName>IREFV-amide</fullName>
        </recommendedName>
    </component>
</protein>